<protein>
    <recommendedName>
        <fullName evidence="3">Coiled-coil domain-containing protein ORF13</fullName>
    </recommendedName>
</protein>
<reference evidence="4" key="1">
    <citation type="journal article" date="2012" name="J. Virol.">
        <title>Complete genome sequences of two Helicobacter pylori bacteriophages isolated from Japanese patients.</title>
        <authorList>
            <person name="Uchiyama J."/>
            <person name="Takeuchi H."/>
            <person name="Kato S."/>
            <person name="Takemura-Uchiyama I."/>
            <person name="Ujihara T."/>
            <person name="Daibata M."/>
            <person name="Matsuzaki S."/>
        </authorList>
    </citation>
    <scope>NUCLEOTIDE SEQUENCE [GENOMIC DNA]</scope>
</reference>
<reference evidence="3" key="2">
    <citation type="journal article" date="2013" name="Appl. Environ. Microbiol.">
        <title>Characterization of Helicobacter pylori bacteriophage KHP30.</title>
        <authorList>
            <person name="Uchiyama J."/>
            <person name="Takeuchi H."/>
            <person name="Kato S."/>
            <person name="Gamoh K."/>
            <person name="Takemura-Uchiyama I."/>
            <person name="Ujihara T."/>
            <person name="Daibata M."/>
            <person name="Matsuzaki S."/>
        </authorList>
    </citation>
    <scope>PROTEIN SEQUENCE OF 2-31</scope>
</reference>
<name>ORF13_BPKHP</name>
<feature type="initiator methionine" description="Removed" evidence="2">
    <location>
        <position position="1"/>
    </location>
</feature>
<feature type="chain" id="PRO_0000420436" description="Coiled-coil domain-containing protein ORF13">
    <location>
        <begin position="2"/>
        <end position="186"/>
    </location>
</feature>
<feature type="coiled-coil region" evidence="1">
    <location>
        <begin position="2"/>
        <end position="30"/>
    </location>
</feature>
<feature type="coiled-coil region" evidence="1">
    <location>
        <begin position="63"/>
        <end position="85"/>
    </location>
</feature>
<accession>I7H893</accession>
<evidence type="ECO:0000255" key="1"/>
<evidence type="ECO:0000269" key="2">
    <source>
    </source>
</evidence>
<evidence type="ECO:0000305" key="3"/>
<evidence type="ECO:0000312" key="4">
    <source>
        <dbReference type="EMBL" id="BAM34755.1"/>
    </source>
</evidence>
<gene>
    <name type="ORF">ORF13</name>
</gene>
<keyword id="KW-0175">Coiled coil</keyword>
<keyword id="KW-0903">Direct protein sequencing</keyword>
<keyword id="KW-1185">Reference proteome</keyword>
<proteinExistence type="evidence at protein level"/>
<organismHost>
    <name type="scientific">Helicobacter pylori (strain 35A)</name>
    <dbReference type="NCBI Taxonomy" id="585535"/>
</organismHost>
<organismHost>
    <name type="scientific">Helicobacter pylori (strain F16)</name>
    <dbReference type="NCBI Taxonomy" id="866344"/>
</organismHost>
<organismHost>
    <name type="scientific">Helicobacter pylori (strain F30)</name>
    <dbReference type="NCBI Taxonomy" id="866345"/>
</organismHost>
<organismHost>
    <name type="scientific">Helicobacter pylori (strain F32)</name>
    <dbReference type="NCBI Taxonomy" id="102608"/>
</organismHost>
<organismHost>
    <name type="scientific">Helicobacter pylori (strain F57)</name>
    <dbReference type="NCBI Taxonomy" id="866346"/>
</organismHost>
<sequence>MGIKEKEIELETLKREIAQAEASLEQDFIKHMVDKTNEKVEDLFFSDKPEFYKFVFTEQNNYLREKLTDKVSKAMDLSDEIQRDKDAEEIEKDKQAFLNKHPEVDFNELLEFYEEELPKRIKTQIDKLEGAAFFEAILDYFNAINAREEEPKKESKEEYSSLPKEALGNGVSGVGYANNENIMTRY</sequence>
<organism>
    <name type="scientific">Helicobacter pylori bacteriophage KHP30</name>
    <dbReference type="NCBI Taxonomy" id="1208236"/>
    <lineage>
        <taxon>Viruses</taxon>
        <taxon>Duplodnaviria</taxon>
        <taxon>Heunggongvirae</taxon>
        <taxon>Uroviricota</taxon>
        <taxon>Caudoviricetes</taxon>
        <taxon>Schmidvirus</taxon>
        <taxon>Schmidvirus KHP30</taxon>
    </lineage>
</organism>
<dbReference type="EMBL" id="AB647160">
    <property type="protein sequence ID" value="BAM34755.1"/>
    <property type="molecule type" value="Genomic_DNA"/>
</dbReference>
<dbReference type="RefSeq" id="YP_007237633.1">
    <property type="nucleotide sequence ID" value="NC_019928.1"/>
</dbReference>
<dbReference type="SMR" id="I7H893"/>
<dbReference type="KEGG" id="vg:14297144"/>
<dbReference type="OrthoDB" id="14146at10239"/>
<dbReference type="Proteomes" id="UP000002900">
    <property type="component" value="Genome"/>
</dbReference>